<dbReference type="EMBL" id="AJ938182">
    <property type="protein sequence ID" value="CAI81000.1"/>
    <property type="molecule type" value="Genomic_DNA"/>
</dbReference>
<dbReference type="RefSeq" id="WP_000241299.1">
    <property type="nucleotide sequence ID" value="NC_007622.1"/>
</dbReference>
<dbReference type="SMR" id="Q2YY59"/>
<dbReference type="KEGG" id="sab:SAB1311c"/>
<dbReference type="HOGENOM" id="CLU_105319_0_0_9"/>
<dbReference type="Gene3D" id="3.40.50.450">
    <property type="match status" value="1"/>
</dbReference>
<dbReference type="HAMAP" id="MF_01575">
    <property type="entry name" value="UPF0398"/>
    <property type="match status" value="1"/>
</dbReference>
<dbReference type="InterPro" id="IPR010697">
    <property type="entry name" value="YspA"/>
</dbReference>
<dbReference type="NCBIfam" id="NF010181">
    <property type="entry name" value="PRK13660.1"/>
    <property type="match status" value="1"/>
</dbReference>
<dbReference type="PANTHER" id="PTHR38440:SF1">
    <property type="entry name" value="UPF0398 PROTEIN SPR0331"/>
    <property type="match status" value="1"/>
</dbReference>
<dbReference type="PANTHER" id="PTHR38440">
    <property type="entry name" value="UPF0398 PROTEIN YPSA"/>
    <property type="match status" value="1"/>
</dbReference>
<dbReference type="Pfam" id="PF06908">
    <property type="entry name" value="YpsA"/>
    <property type="match status" value="1"/>
</dbReference>
<dbReference type="PIRSF" id="PIRSF021290">
    <property type="entry name" value="DUF1273"/>
    <property type="match status" value="1"/>
</dbReference>
<dbReference type="SUPFAM" id="SSF102405">
    <property type="entry name" value="MCP/YpsA-like"/>
    <property type="match status" value="1"/>
</dbReference>
<comment type="similarity">
    <text evidence="1">Belongs to the UPF0398 family.</text>
</comment>
<evidence type="ECO:0000255" key="1">
    <source>
        <dbReference type="HAMAP-Rule" id="MF_01575"/>
    </source>
</evidence>
<organism>
    <name type="scientific">Staphylococcus aureus (strain bovine RF122 / ET3-1)</name>
    <dbReference type="NCBI Taxonomy" id="273036"/>
    <lineage>
        <taxon>Bacteria</taxon>
        <taxon>Bacillati</taxon>
        <taxon>Bacillota</taxon>
        <taxon>Bacilli</taxon>
        <taxon>Bacillales</taxon>
        <taxon>Staphylococcaceae</taxon>
        <taxon>Staphylococcus</taxon>
    </lineage>
</organism>
<reference key="1">
    <citation type="journal article" date="2007" name="PLoS ONE">
        <title>Molecular correlates of host specialization in Staphylococcus aureus.</title>
        <authorList>
            <person name="Herron-Olson L."/>
            <person name="Fitzgerald J.R."/>
            <person name="Musser J.M."/>
            <person name="Kapur V."/>
        </authorList>
    </citation>
    <scope>NUCLEOTIDE SEQUENCE [LARGE SCALE GENOMIC DNA]</scope>
    <source>
        <strain>bovine RF122 / ET3-1</strain>
    </source>
</reference>
<feature type="chain" id="PRO_0000267168" description="UPF0398 protein SAB1311c">
    <location>
        <begin position="1"/>
        <end position="187"/>
    </location>
</feature>
<protein>
    <recommendedName>
        <fullName evidence="1">UPF0398 protein SAB1311c</fullName>
    </recommendedName>
</protein>
<gene>
    <name type="ordered locus">SAB1311c</name>
</gene>
<name>Y1311_STAAB</name>
<proteinExistence type="inferred from homology"/>
<sequence length="187" mass="22235">MVKTVYVTGYKSFELNIFKDDAPEIHYLKQFIKHKIEQLLDEGLEWVLIQGQMGIELWTTEVVIELQRTYDSLKFAVITPFQGHTEKWNEHNQSKYANIIKHADYVDSIFHTSYQGPFQFKQADQFMLEHSDQTLLIYDEEQEASPKFFKQMLVDFMDKTNYTCDIVTFDELTAFINDLQWSEDQSF</sequence>
<accession>Q2YY59</accession>